<evidence type="ECO:0000255" key="1">
    <source>
        <dbReference type="HAMAP-Rule" id="MF_00147"/>
    </source>
</evidence>
<comment type="function">
    <text evidence="1">Involved in the gluconeogenesis. Catalyzes stereospecifically the conversion of dihydroxyacetone phosphate (DHAP) to D-glyceraldehyde-3-phosphate (G3P).</text>
</comment>
<comment type="catalytic activity">
    <reaction evidence="1">
        <text>D-glyceraldehyde 3-phosphate = dihydroxyacetone phosphate</text>
        <dbReference type="Rhea" id="RHEA:18585"/>
        <dbReference type="ChEBI" id="CHEBI:57642"/>
        <dbReference type="ChEBI" id="CHEBI:59776"/>
        <dbReference type="EC" id="5.3.1.1"/>
    </reaction>
</comment>
<comment type="pathway">
    <text evidence="1">Carbohydrate biosynthesis; gluconeogenesis.</text>
</comment>
<comment type="pathway">
    <text evidence="1">Carbohydrate degradation; glycolysis; D-glyceraldehyde 3-phosphate from glycerone phosphate: step 1/1.</text>
</comment>
<comment type="subunit">
    <text evidence="1">Homodimer.</text>
</comment>
<comment type="subcellular location">
    <subcellularLocation>
        <location evidence="1">Cytoplasm</location>
    </subcellularLocation>
</comment>
<comment type="similarity">
    <text evidence="1">Belongs to the triosephosphate isomerase family.</text>
</comment>
<accession>Q0C197</accession>
<organism>
    <name type="scientific">Hyphomonas neptunium (strain ATCC 15444)</name>
    <dbReference type="NCBI Taxonomy" id="228405"/>
    <lineage>
        <taxon>Bacteria</taxon>
        <taxon>Pseudomonadati</taxon>
        <taxon>Pseudomonadota</taxon>
        <taxon>Alphaproteobacteria</taxon>
        <taxon>Hyphomonadales</taxon>
        <taxon>Hyphomonadaceae</taxon>
        <taxon>Hyphomonas</taxon>
    </lineage>
</organism>
<reference key="1">
    <citation type="journal article" date="2006" name="J. Bacteriol.">
        <title>Comparative genomic evidence for a close relationship between the dimorphic prosthecate bacteria Hyphomonas neptunium and Caulobacter crescentus.</title>
        <authorList>
            <person name="Badger J.H."/>
            <person name="Hoover T.R."/>
            <person name="Brun Y.V."/>
            <person name="Weiner R.M."/>
            <person name="Laub M.T."/>
            <person name="Alexandre G."/>
            <person name="Mrazek J."/>
            <person name="Ren Q."/>
            <person name="Paulsen I.T."/>
            <person name="Nelson K.E."/>
            <person name="Khouri H.M."/>
            <person name="Radune D."/>
            <person name="Sosa J."/>
            <person name="Dodson R.J."/>
            <person name="Sullivan S.A."/>
            <person name="Rosovitz M.J."/>
            <person name="Madupu R."/>
            <person name="Brinkac L.M."/>
            <person name="Durkin A.S."/>
            <person name="Daugherty S.C."/>
            <person name="Kothari S.P."/>
            <person name="Giglio M.G."/>
            <person name="Zhou L."/>
            <person name="Haft D.H."/>
            <person name="Selengut J.D."/>
            <person name="Davidsen T.M."/>
            <person name="Yang Q."/>
            <person name="Zafar N."/>
            <person name="Ward N.L."/>
        </authorList>
    </citation>
    <scope>NUCLEOTIDE SEQUENCE [LARGE SCALE GENOMIC DNA]</scope>
    <source>
        <strain>ATCC 15444</strain>
    </source>
</reference>
<sequence>MPRTLIAGNWKMNGLMANLAEVERVAAEVPASSEGAETLLCLPATLIHAGSAKSEGSGLKIGGETCHANEKGAHTGDLAAEMLKDAGASYVIVGHSERRADHGETDAVVAAQASAALRAGITPIICVGETLDQRDAGEVLTVITTQMAESIPEGAEAAAIVIAYEPVWAIGTGRVATSEQIAEVHTSIRNLLVRRFGDAGRTTRILYGGSMNPGNAAEILAVAEVNGGLIGGASLKAADFLAIYRLAAQ</sequence>
<proteinExistence type="inferred from homology"/>
<feature type="chain" id="PRO_1000058112" description="Triosephosphate isomerase">
    <location>
        <begin position="1"/>
        <end position="249"/>
    </location>
</feature>
<feature type="active site" description="Electrophile" evidence="1">
    <location>
        <position position="95"/>
    </location>
</feature>
<feature type="active site" description="Proton acceptor" evidence="1">
    <location>
        <position position="165"/>
    </location>
</feature>
<feature type="binding site" evidence="1">
    <location>
        <begin position="9"/>
        <end position="11"/>
    </location>
    <ligand>
        <name>substrate</name>
    </ligand>
</feature>
<feature type="binding site" evidence="1">
    <location>
        <position position="171"/>
    </location>
    <ligand>
        <name>substrate</name>
    </ligand>
</feature>
<feature type="binding site" evidence="1">
    <location>
        <position position="210"/>
    </location>
    <ligand>
        <name>substrate</name>
    </ligand>
</feature>
<feature type="binding site" evidence="1">
    <location>
        <begin position="231"/>
        <end position="232"/>
    </location>
    <ligand>
        <name>substrate</name>
    </ligand>
</feature>
<name>TPIS_HYPNA</name>
<gene>
    <name evidence="1" type="primary">tpiA</name>
    <name type="ordered locus">HNE_1792</name>
</gene>
<keyword id="KW-0963">Cytoplasm</keyword>
<keyword id="KW-0312">Gluconeogenesis</keyword>
<keyword id="KW-0324">Glycolysis</keyword>
<keyword id="KW-0413">Isomerase</keyword>
<keyword id="KW-1185">Reference proteome</keyword>
<dbReference type="EC" id="5.3.1.1" evidence="1"/>
<dbReference type="EMBL" id="CP000158">
    <property type="protein sequence ID" value="ABI77970.1"/>
    <property type="molecule type" value="Genomic_DNA"/>
</dbReference>
<dbReference type="RefSeq" id="WP_011646796.1">
    <property type="nucleotide sequence ID" value="NC_008358.1"/>
</dbReference>
<dbReference type="SMR" id="Q0C197"/>
<dbReference type="STRING" id="228405.HNE_1792"/>
<dbReference type="KEGG" id="hne:HNE_1792"/>
<dbReference type="eggNOG" id="COG0149">
    <property type="taxonomic scope" value="Bacteria"/>
</dbReference>
<dbReference type="HOGENOM" id="CLU_024251_2_1_5"/>
<dbReference type="UniPathway" id="UPA00109">
    <property type="reaction ID" value="UER00189"/>
</dbReference>
<dbReference type="UniPathway" id="UPA00138"/>
<dbReference type="Proteomes" id="UP000001959">
    <property type="component" value="Chromosome"/>
</dbReference>
<dbReference type="GO" id="GO:0005829">
    <property type="term" value="C:cytosol"/>
    <property type="evidence" value="ECO:0007669"/>
    <property type="project" value="TreeGrafter"/>
</dbReference>
<dbReference type="GO" id="GO:0004807">
    <property type="term" value="F:triose-phosphate isomerase activity"/>
    <property type="evidence" value="ECO:0007669"/>
    <property type="project" value="UniProtKB-UniRule"/>
</dbReference>
<dbReference type="GO" id="GO:0006094">
    <property type="term" value="P:gluconeogenesis"/>
    <property type="evidence" value="ECO:0007669"/>
    <property type="project" value="UniProtKB-UniRule"/>
</dbReference>
<dbReference type="GO" id="GO:0046166">
    <property type="term" value="P:glyceraldehyde-3-phosphate biosynthetic process"/>
    <property type="evidence" value="ECO:0007669"/>
    <property type="project" value="TreeGrafter"/>
</dbReference>
<dbReference type="GO" id="GO:0019563">
    <property type="term" value="P:glycerol catabolic process"/>
    <property type="evidence" value="ECO:0007669"/>
    <property type="project" value="TreeGrafter"/>
</dbReference>
<dbReference type="GO" id="GO:0006096">
    <property type="term" value="P:glycolytic process"/>
    <property type="evidence" value="ECO:0007669"/>
    <property type="project" value="UniProtKB-UniRule"/>
</dbReference>
<dbReference type="CDD" id="cd00311">
    <property type="entry name" value="TIM"/>
    <property type="match status" value="1"/>
</dbReference>
<dbReference type="FunFam" id="3.20.20.70:FF:000016">
    <property type="entry name" value="Triosephosphate isomerase"/>
    <property type="match status" value="1"/>
</dbReference>
<dbReference type="Gene3D" id="3.20.20.70">
    <property type="entry name" value="Aldolase class I"/>
    <property type="match status" value="1"/>
</dbReference>
<dbReference type="HAMAP" id="MF_00147_B">
    <property type="entry name" value="TIM_B"/>
    <property type="match status" value="1"/>
</dbReference>
<dbReference type="InterPro" id="IPR013785">
    <property type="entry name" value="Aldolase_TIM"/>
</dbReference>
<dbReference type="InterPro" id="IPR035990">
    <property type="entry name" value="TIM_sf"/>
</dbReference>
<dbReference type="InterPro" id="IPR022896">
    <property type="entry name" value="TrioseP_Isoase_bac/euk"/>
</dbReference>
<dbReference type="InterPro" id="IPR000652">
    <property type="entry name" value="Triosephosphate_isomerase"/>
</dbReference>
<dbReference type="InterPro" id="IPR020861">
    <property type="entry name" value="Triosephosphate_isomerase_AS"/>
</dbReference>
<dbReference type="NCBIfam" id="TIGR00419">
    <property type="entry name" value="tim"/>
    <property type="match status" value="1"/>
</dbReference>
<dbReference type="PANTHER" id="PTHR21139">
    <property type="entry name" value="TRIOSEPHOSPHATE ISOMERASE"/>
    <property type="match status" value="1"/>
</dbReference>
<dbReference type="PANTHER" id="PTHR21139:SF42">
    <property type="entry name" value="TRIOSEPHOSPHATE ISOMERASE"/>
    <property type="match status" value="1"/>
</dbReference>
<dbReference type="Pfam" id="PF00121">
    <property type="entry name" value="TIM"/>
    <property type="match status" value="1"/>
</dbReference>
<dbReference type="SUPFAM" id="SSF51351">
    <property type="entry name" value="Triosephosphate isomerase (TIM)"/>
    <property type="match status" value="1"/>
</dbReference>
<dbReference type="PROSITE" id="PS00171">
    <property type="entry name" value="TIM_1"/>
    <property type="match status" value="1"/>
</dbReference>
<dbReference type="PROSITE" id="PS51440">
    <property type="entry name" value="TIM_2"/>
    <property type="match status" value="1"/>
</dbReference>
<protein>
    <recommendedName>
        <fullName evidence="1">Triosephosphate isomerase</fullName>
        <shortName evidence="1">TIM</shortName>
        <shortName evidence="1">TPI</shortName>
        <ecNumber evidence="1">5.3.1.1</ecNumber>
    </recommendedName>
    <alternativeName>
        <fullName evidence="1">Triose-phosphate isomerase</fullName>
    </alternativeName>
</protein>